<organism>
    <name type="scientific">Pseudomonas putida (strain W619)</name>
    <dbReference type="NCBI Taxonomy" id="390235"/>
    <lineage>
        <taxon>Bacteria</taxon>
        <taxon>Pseudomonadati</taxon>
        <taxon>Pseudomonadota</taxon>
        <taxon>Gammaproteobacteria</taxon>
        <taxon>Pseudomonadales</taxon>
        <taxon>Pseudomonadaceae</taxon>
        <taxon>Pseudomonas</taxon>
    </lineage>
</organism>
<accession>B1JDE2</accession>
<reference key="1">
    <citation type="submission" date="2008-02" db="EMBL/GenBank/DDBJ databases">
        <title>Complete sequence of Pseudomonas putida W619.</title>
        <authorList>
            <person name="Copeland A."/>
            <person name="Lucas S."/>
            <person name="Lapidus A."/>
            <person name="Barry K."/>
            <person name="Detter J.C."/>
            <person name="Glavina del Rio T."/>
            <person name="Dalin E."/>
            <person name="Tice H."/>
            <person name="Pitluck S."/>
            <person name="Chain P."/>
            <person name="Malfatti S."/>
            <person name="Shin M."/>
            <person name="Vergez L."/>
            <person name="Schmutz J."/>
            <person name="Larimer F."/>
            <person name="Land M."/>
            <person name="Hauser L."/>
            <person name="Kyrpides N."/>
            <person name="Kim E."/>
            <person name="Taghavi S."/>
            <person name="Vangronsveld D."/>
            <person name="van der Lelie D."/>
            <person name="Richardson P."/>
        </authorList>
    </citation>
    <scope>NUCLEOTIDE SEQUENCE [LARGE SCALE GENOMIC DNA]</scope>
    <source>
        <strain>W619</strain>
    </source>
</reference>
<comment type="function">
    <text evidence="1">This protein is located at the 30S-50S ribosomal subunit interface and may play a role in the structure and function of the aminoacyl-tRNA binding site.</text>
</comment>
<comment type="similarity">
    <text evidence="1">Belongs to the bacterial ribosomal protein bL19 family.</text>
</comment>
<dbReference type="EMBL" id="CP000949">
    <property type="protein sequence ID" value="ACA74634.1"/>
    <property type="molecule type" value="Genomic_DNA"/>
</dbReference>
<dbReference type="SMR" id="B1JDE2"/>
<dbReference type="STRING" id="390235.PputW619_4154"/>
<dbReference type="KEGG" id="ppw:PputW619_4154"/>
<dbReference type="eggNOG" id="COG0335">
    <property type="taxonomic scope" value="Bacteria"/>
</dbReference>
<dbReference type="HOGENOM" id="CLU_103507_2_1_6"/>
<dbReference type="OrthoDB" id="9803541at2"/>
<dbReference type="GO" id="GO:0022625">
    <property type="term" value="C:cytosolic large ribosomal subunit"/>
    <property type="evidence" value="ECO:0007669"/>
    <property type="project" value="TreeGrafter"/>
</dbReference>
<dbReference type="GO" id="GO:0003735">
    <property type="term" value="F:structural constituent of ribosome"/>
    <property type="evidence" value="ECO:0007669"/>
    <property type="project" value="InterPro"/>
</dbReference>
<dbReference type="GO" id="GO:0006412">
    <property type="term" value="P:translation"/>
    <property type="evidence" value="ECO:0007669"/>
    <property type="project" value="UniProtKB-UniRule"/>
</dbReference>
<dbReference type="FunFam" id="2.30.30.790:FF:000001">
    <property type="entry name" value="50S ribosomal protein L19"/>
    <property type="match status" value="1"/>
</dbReference>
<dbReference type="Gene3D" id="2.30.30.790">
    <property type="match status" value="1"/>
</dbReference>
<dbReference type="HAMAP" id="MF_00402">
    <property type="entry name" value="Ribosomal_bL19"/>
    <property type="match status" value="1"/>
</dbReference>
<dbReference type="InterPro" id="IPR001857">
    <property type="entry name" value="Ribosomal_bL19"/>
</dbReference>
<dbReference type="InterPro" id="IPR018257">
    <property type="entry name" value="Ribosomal_bL19_CS"/>
</dbReference>
<dbReference type="InterPro" id="IPR038657">
    <property type="entry name" value="Ribosomal_bL19_sf"/>
</dbReference>
<dbReference type="InterPro" id="IPR008991">
    <property type="entry name" value="Translation_prot_SH3-like_sf"/>
</dbReference>
<dbReference type="NCBIfam" id="TIGR01024">
    <property type="entry name" value="rplS_bact"/>
    <property type="match status" value="1"/>
</dbReference>
<dbReference type="PANTHER" id="PTHR15680:SF9">
    <property type="entry name" value="LARGE RIBOSOMAL SUBUNIT PROTEIN BL19M"/>
    <property type="match status" value="1"/>
</dbReference>
<dbReference type="PANTHER" id="PTHR15680">
    <property type="entry name" value="RIBOSOMAL PROTEIN L19"/>
    <property type="match status" value="1"/>
</dbReference>
<dbReference type="Pfam" id="PF01245">
    <property type="entry name" value="Ribosomal_L19"/>
    <property type="match status" value="1"/>
</dbReference>
<dbReference type="PIRSF" id="PIRSF002191">
    <property type="entry name" value="Ribosomal_L19"/>
    <property type="match status" value="1"/>
</dbReference>
<dbReference type="PRINTS" id="PR00061">
    <property type="entry name" value="RIBOSOMALL19"/>
</dbReference>
<dbReference type="SUPFAM" id="SSF50104">
    <property type="entry name" value="Translation proteins SH3-like domain"/>
    <property type="match status" value="1"/>
</dbReference>
<dbReference type="PROSITE" id="PS01015">
    <property type="entry name" value="RIBOSOMAL_L19"/>
    <property type="match status" value="1"/>
</dbReference>
<evidence type="ECO:0000255" key="1">
    <source>
        <dbReference type="HAMAP-Rule" id="MF_00402"/>
    </source>
</evidence>
<evidence type="ECO:0000305" key="2"/>
<name>RL19_PSEPW</name>
<keyword id="KW-0687">Ribonucleoprotein</keyword>
<keyword id="KW-0689">Ribosomal protein</keyword>
<protein>
    <recommendedName>
        <fullName evidence="1">Large ribosomal subunit protein bL19</fullName>
    </recommendedName>
    <alternativeName>
        <fullName evidence="2">50S ribosomal protein L19</fullName>
    </alternativeName>
</protein>
<proteinExistence type="inferred from homology"/>
<sequence>MTNKIIQQLEAEQMSKEIPTFAPGDTIVVQVKVKEGERSRLQAFEGVVIAKRNRGLNSAFTVRKISSGVGVERTFQTYSPQIDSLAVKRRGDVRKAKLYYLRDLSGKAARIKEKLS</sequence>
<gene>
    <name evidence="1" type="primary">rplS</name>
    <name type="ordered locus">PputW619_4154</name>
</gene>
<feature type="chain" id="PRO_1000123358" description="Large ribosomal subunit protein bL19">
    <location>
        <begin position="1"/>
        <end position="116"/>
    </location>
</feature>